<keyword id="KW-0963">Cytoplasm</keyword>
<keyword id="KW-0489">Methyltransferase</keyword>
<keyword id="KW-0698">rRNA processing</keyword>
<keyword id="KW-0949">S-adenosyl-L-methionine</keyword>
<keyword id="KW-0808">Transferase</keyword>
<comment type="function">
    <text evidence="1">Specifically methylates the N4 position of cytidine in position 1402 (C1402) of 16S rRNA.</text>
</comment>
<comment type="catalytic activity">
    <reaction evidence="1">
        <text>cytidine(1402) in 16S rRNA + S-adenosyl-L-methionine = N(4)-methylcytidine(1402) in 16S rRNA + S-adenosyl-L-homocysteine + H(+)</text>
        <dbReference type="Rhea" id="RHEA:42928"/>
        <dbReference type="Rhea" id="RHEA-COMP:10286"/>
        <dbReference type="Rhea" id="RHEA-COMP:10287"/>
        <dbReference type="ChEBI" id="CHEBI:15378"/>
        <dbReference type="ChEBI" id="CHEBI:57856"/>
        <dbReference type="ChEBI" id="CHEBI:59789"/>
        <dbReference type="ChEBI" id="CHEBI:74506"/>
        <dbReference type="ChEBI" id="CHEBI:82748"/>
        <dbReference type="EC" id="2.1.1.199"/>
    </reaction>
</comment>
<comment type="subcellular location">
    <subcellularLocation>
        <location evidence="1">Cytoplasm</location>
    </subcellularLocation>
</comment>
<comment type="similarity">
    <text evidence="1">Belongs to the methyltransferase superfamily. RsmH family.</text>
</comment>
<protein>
    <recommendedName>
        <fullName evidence="1">Ribosomal RNA small subunit methyltransferase H</fullName>
        <ecNumber evidence="1">2.1.1.199</ecNumber>
    </recommendedName>
    <alternativeName>
        <fullName evidence="1">16S rRNA m(4)C1402 methyltransferase</fullName>
    </alternativeName>
    <alternativeName>
        <fullName evidence="1">rRNA (cytosine-N(4)-)-methyltransferase RsmH</fullName>
    </alternativeName>
</protein>
<accession>B8ZQP2</accession>
<organism>
    <name type="scientific">Mycobacterium leprae (strain Br4923)</name>
    <dbReference type="NCBI Taxonomy" id="561304"/>
    <lineage>
        <taxon>Bacteria</taxon>
        <taxon>Bacillati</taxon>
        <taxon>Actinomycetota</taxon>
        <taxon>Actinomycetes</taxon>
        <taxon>Mycobacteriales</taxon>
        <taxon>Mycobacteriaceae</taxon>
        <taxon>Mycobacterium</taxon>
    </lineage>
</organism>
<evidence type="ECO:0000255" key="1">
    <source>
        <dbReference type="HAMAP-Rule" id="MF_01007"/>
    </source>
</evidence>
<gene>
    <name evidence="1" type="primary">rsmH</name>
    <name type="synonym">mraW</name>
    <name type="ordered locus">MLBr00906</name>
</gene>
<dbReference type="EC" id="2.1.1.199" evidence="1"/>
<dbReference type="EMBL" id="FM211192">
    <property type="protein sequence ID" value="CAR71001.1"/>
    <property type="molecule type" value="Genomic_DNA"/>
</dbReference>
<dbReference type="SMR" id="B8ZQP2"/>
<dbReference type="KEGG" id="mlb:MLBr00906"/>
<dbReference type="HOGENOM" id="CLU_038422_0_0_11"/>
<dbReference type="Proteomes" id="UP000006900">
    <property type="component" value="Chromosome"/>
</dbReference>
<dbReference type="GO" id="GO:0005737">
    <property type="term" value="C:cytoplasm"/>
    <property type="evidence" value="ECO:0007669"/>
    <property type="project" value="UniProtKB-SubCell"/>
</dbReference>
<dbReference type="GO" id="GO:0071424">
    <property type="term" value="F:rRNA (cytosine-N4-)-methyltransferase activity"/>
    <property type="evidence" value="ECO:0007669"/>
    <property type="project" value="UniProtKB-UniRule"/>
</dbReference>
<dbReference type="GO" id="GO:0070475">
    <property type="term" value="P:rRNA base methylation"/>
    <property type="evidence" value="ECO:0007669"/>
    <property type="project" value="UniProtKB-UniRule"/>
</dbReference>
<dbReference type="FunFam" id="1.10.150.170:FF:000001">
    <property type="entry name" value="Ribosomal RNA small subunit methyltransferase H"/>
    <property type="match status" value="1"/>
</dbReference>
<dbReference type="Gene3D" id="1.10.150.170">
    <property type="entry name" value="Putative methyltransferase TM0872, insert domain"/>
    <property type="match status" value="1"/>
</dbReference>
<dbReference type="Gene3D" id="3.40.50.150">
    <property type="entry name" value="Vaccinia Virus protein VP39"/>
    <property type="match status" value="1"/>
</dbReference>
<dbReference type="HAMAP" id="MF_01007">
    <property type="entry name" value="16SrRNA_methyltr_H"/>
    <property type="match status" value="1"/>
</dbReference>
<dbReference type="InterPro" id="IPR002903">
    <property type="entry name" value="RsmH"/>
</dbReference>
<dbReference type="InterPro" id="IPR023397">
    <property type="entry name" value="SAM-dep_MeTrfase_MraW_recog"/>
</dbReference>
<dbReference type="InterPro" id="IPR029063">
    <property type="entry name" value="SAM-dependent_MTases_sf"/>
</dbReference>
<dbReference type="NCBIfam" id="TIGR00006">
    <property type="entry name" value="16S rRNA (cytosine(1402)-N(4))-methyltransferase RsmH"/>
    <property type="match status" value="1"/>
</dbReference>
<dbReference type="PANTHER" id="PTHR11265:SF0">
    <property type="entry name" value="12S RRNA N4-METHYLCYTIDINE METHYLTRANSFERASE"/>
    <property type="match status" value="1"/>
</dbReference>
<dbReference type="PANTHER" id="PTHR11265">
    <property type="entry name" value="S-ADENOSYL-METHYLTRANSFERASE MRAW"/>
    <property type="match status" value="1"/>
</dbReference>
<dbReference type="Pfam" id="PF01795">
    <property type="entry name" value="Methyltransf_5"/>
    <property type="match status" value="1"/>
</dbReference>
<dbReference type="SUPFAM" id="SSF81799">
    <property type="entry name" value="Putative methyltransferase TM0872, insert domain"/>
    <property type="match status" value="1"/>
</dbReference>
<dbReference type="SUPFAM" id="SSF53335">
    <property type="entry name" value="S-adenosyl-L-methionine-dependent methyltransferases"/>
    <property type="match status" value="1"/>
</dbReference>
<feature type="chain" id="PRO_0000386989" description="Ribosomal RNA small subunit methyltransferase H">
    <location>
        <begin position="1"/>
        <end position="372"/>
    </location>
</feature>
<feature type="binding site" evidence="1">
    <location>
        <begin position="78"/>
        <end position="80"/>
    </location>
    <ligand>
        <name>S-adenosyl-L-methionine</name>
        <dbReference type="ChEBI" id="CHEBI:59789"/>
    </ligand>
</feature>
<feature type="binding site" evidence="1">
    <location>
        <position position="97"/>
    </location>
    <ligand>
        <name>S-adenosyl-L-methionine</name>
        <dbReference type="ChEBI" id="CHEBI:59789"/>
    </ligand>
</feature>
<feature type="binding site" evidence="1">
    <location>
        <position position="124"/>
    </location>
    <ligand>
        <name>S-adenosyl-L-methionine</name>
        <dbReference type="ChEBI" id="CHEBI:59789"/>
    </ligand>
</feature>
<feature type="binding site" evidence="1">
    <location>
        <position position="148"/>
    </location>
    <ligand>
        <name>S-adenosyl-L-methionine</name>
        <dbReference type="ChEBI" id="CHEBI:59789"/>
    </ligand>
</feature>
<feature type="binding site" evidence="1">
    <location>
        <position position="155"/>
    </location>
    <ligand>
        <name>S-adenosyl-L-methionine</name>
        <dbReference type="ChEBI" id="CHEBI:59789"/>
    </ligand>
</feature>
<proteinExistence type="inferred from homology"/>
<reference key="1">
    <citation type="journal article" date="2009" name="Nat. Genet.">
        <title>Comparative genomic and phylogeographic analysis of Mycobacterium leprae.</title>
        <authorList>
            <person name="Monot M."/>
            <person name="Honore N."/>
            <person name="Garnier T."/>
            <person name="Zidane N."/>
            <person name="Sherafi D."/>
            <person name="Paniz-Mondolfi A."/>
            <person name="Matsuoka M."/>
            <person name="Taylor G.M."/>
            <person name="Donoghue H.D."/>
            <person name="Bouwman A."/>
            <person name="Mays S."/>
            <person name="Watson C."/>
            <person name="Lockwood D."/>
            <person name="Khamispour A."/>
            <person name="Dowlati Y."/>
            <person name="Jianping S."/>
            <person name="Rea T.H."/>
            <person name="Vera-Cabrera L."/>
            <person name="Stefani M.M."/>
            <person name="Banu S."/>
            <person name="Macdonald M."/>
            <person name="Sapkota B.R."/>
            <person name="Spencer J.S."/>
            <person name="Thomas J."/>
            <person name="Harshman K."/>
            <person name="Singh P."/>
            <person name="Busso P."/>
            <person name="Gattiker A."/>
            <person name="Rougemont J."/>
            <person name="Brennan P.J."/>
            <person name="Cole S.T."/>
        </authorList>
    </citation>
    <scope>NUCLEOTIDE SEQUENCE [LARGE SCALE GENOMIC DNA]</scope>
    <source>
        <strain>Br4923</strain>
    </source>
</reference>
<sequence>MPSDRDHDAGIFAFFGAVPRSDRCRQTRGGGEVVDGSSVFGHVPVFAQRCVTLLAPALTRHHADGSNAILVDATLGVGGHAERFLTEFPGLRLIGLDRDPSALDIARTRLMRFADRVTLIHTRYDNLAVALNKFGYAAVESVDGVLFDLGVSSMQLDCAERGFSYAQDVPLDMRMDPWSPVSAADIVNNYDEAALADILRRYGEERFARRIAAHIVRRRAHTPFTSTAELVALLYQAIPAPARRIGGHPAKRTFQALRIAVNDELNSLSNVLPAALDALTVAGRLVVLAYQSLEDRIVKRVFADAVSSRTPAGLPIELPGHGPRFRLLTRGAEHADAAEIECNPRSAAVRLRALQRTQHGVEPQQPTRRGDS</sequence>
<name>RSMH_MYCLB</name>